<reference key="1">
    <citation type="journal article" date="2001" name="Nature">
        <title>Genome sequence of enterohaemorrhagic Escherichia coli O157:H7.</title>
        <authorList>
            <person name="Perna N.T."/>
            <person name="Plunkett G. III"/>
            <person name="Burland V."/>
            <person name="Mau B."/>
            <person name="Glasner J.D."/>
            <person name="Rose D.J."/>
            <person name="Mayhew G.F."/>
            <person name="Evans P.S."/>
            <person name="Gregor J."/>
            <person name="Kirkpatrick H.A."/>
            <person name="Posfai G."/>
            <person name="Hackett J."/>
            <person name="Klink S."/>
            <person name="Boutin A."/>
            <person name="Shao Y."/>
            <person name="Miller L."/>
            <person name="Grotbeck E.J."/>
            <person name="Davis N.W."/>
            <person name="Lim A."/>
            <person name="Dimalanta E.T."/>
            <person name="Potamousis K."/>
            <person name="Apodaca J."/>
            <person name="Anantharaman T.S."/>
            <person name="Lin J."/>
            <person name="Yen G."/>
            <person name="Schwartz D.C."/>
            <person name="Welch R.A."/>
            <person name="Blattner F.R."/>
        </authorList>
    </citation>
    <scope>NUCLEOTIDE SEQUENCE [LARGE SCALE GENOMIC DNA]</scope>
    <source>
        <strain>O157:H7 / EDL933 / ATCC 700927 / EHEC</strain>
    </source>
</reference>
<reference key="2">
    <citation type="journal article" date="2001" name="DNA Res.">
        <title>Complete genome sequence of enterohemorrhagic Escherichia coli O157:H7 and genomic comparison with a laboratory strain K-12.</title>
        <authorList>
            <person name="Hayashi T."/>
            <person name="Makino K."/>
            <person name="Ohnishi M."/>
            <person name="Kurokawa K."/>
            <person name="Ishii K."/>
            <person name="Yokoyama K."/>
            <person name="Han C.-G."/>
            <person name="Ohtsubo E."/>
            <person name="Nakayama K."/>
            <person name="Murata T."/>
            <person name="Tanaka M."/>
            <person name="Tobe T."/>
            <person name="Iida T."/>
            <person name="Takami H."/>
            <person name="Honda T."/>
            <person name="Sasakawa C."/>
            <person name="Ogasawara N."/>
            <person name="Yasunaga T."/>
            <person name="Kuhara S."/>
            <person name="Shiba T."/>
            <person name="Hattori M."/>
            <person name="Shinagawa H."/>
        </authorList>
    </citation>
    <scope>NUCLEOTIDE SEQUENCE [LARGE SCALE GENOMIC DNA]</scope>
    <source>
        <strain>O157:H7 / Sakai / RIMD 0509952 / EHEC</strain>
    </source>
</reference>
<gene>
    <name evidence="1" type="primary">iraD</name>
    <name type="ordered locus">Z5925</name>
    <name type="ordered locus">ECs5285</name>
</gene>
<evidence type="ECO:0000255" key="1">
    <source>
        <dbReference type="HAMAP-Rule" id="MF_02010"/>
    </source>
</evidence>
<evidence type="ECO:0000305" key="2"/>
<dbReference type="EMBL" id="AE005174">
    <property type="protein sequence ID" value="AAG59509.1"/>
    <property type="status" value="ALT_INIT"/>
    <property type="molecule type" value="Genomic_DNA"/>
</dbReference>
<dbReference type="EMBL" id="BA000007">
    <property type="protein sequence ID" value="BAB38708.2"/>
    <property type="molecule type" value="Genomic_DNA"/>
</dbReference>
<dbReference type="PIR" id="A86131">
    <property type="entry name" value="A86131"/>
</dbReference>
<dbReference type="PIR" id="E91289">
    <property type="entry name" value="E91289"/>
</dbReference>
<dbReference type="RefSeq" id="NP_313312.2">
    <property type="nucleotide sequence ID" value="NC_002695.1"/>
</dbReference>
<dbReference type="RefSeq" id="WP_001301619.1">
    <property type="nucleotide sequence ID" value="NZ_VOAI01000002.1"/>
</dbReference>
<dbReference type="SMR" id="Q8XBA4"/>
<dbReference type="STRING" id="155864.Z5925"/>
<dbReference type="GeneID" id="913663"/>
<dbReference type="KEGG" id="ece:Z5925"/>
<dbReference type="KEGG" id="ecs:ECs_5285"/>
<dbReference type="PATRIC" id="fig|386585.9.peg.5525"/>
<dbReference type="eggNOG" id="COG3518">
    <property type="taxonomic scope" value="Bacteria"/>
</dbReference>
<dbReference type="HOGENOM" id="CLU_1977621_0_0_6"/>
<dbReference type="OMA" id="FKEAYCH"/>
<dbReference type="Proteomes" id="UP000000558">
    <property type="component" value="Chromosome"/>
</dbReference>
<dbReference type="Proteomes" id="UP000002519">
    <property type="component" value="Chromosome"/>
</dbReference>
<dbReference type="GO" id="GO:0005737">
    <property type="term" value="C:cytoplasm"/>
    <property type="evidence" value="ECO:0007669"/>
    <property type="project" value="UniProtKB-SubCell"/>
</dbReference>
<dbReference type="GO" id="GO:0043856">
    <property type="term" value="F:anti-sigma factor antagonist activity"/>
    <property type="evidence" value="ECO:0007669"/>
    <property type="project" value="InterPro"/>
</dbReference>
<dbReference type="GO" id="GO:0034599">
    <property type="term" value="P:cellular response to oxidative stress"/>
    <property type="evidence" value="ECO:0007669"/>
    <property type="project" value="UniProtKB-UniRule"/>
</dbReference>
<dbReference type="GO" id="GO:0006974">
    <property type="term" value="P:DNA damage response"/>
    <property type="evidence" value="ECO:0007669"/>
    <property type="project" value="InterPro"/>
</dbReference>
<dbReference type="HAMAP" id="MF_02010">
    <property type="entry name" value="IraD"/>
    <property type="match status" value="1"/>
</dbReference>
<dbReference type="InterPro" id="IPR023776">
    <property type="entry name" value="Anti-adapt_IraD"/>
</dbReference>
<dbReference type="InterPro" id="IPR007048">
    <property type="entry name" value="IraD/Gp25-like"/>
</dbReference>
<dbReference type="NCBIfam" id="NF010726">
    <property type="entry name" value="PRK14128.1-1"/>
    <property type="match status" value="1"/>
</dbReference>
<dbReference type="NCBIfam" id="NF010728">
    <property type="entry name" value="PRK14128.1-3"/>
    <property type="match status" value="1"/>
</dbReference>
<dbReference type="Pfam" id="PF04965">
    <property type="entry name" value="GPW_gp25"/>
    <property type="match status" value="1"/>
</dbReference>
<dbReference type="SUPFAM" id="SSF160719">
    <property type="entry name" value="gpW/gp25-like"/>
    <property type="match status" value="1"/>
</dbReference>
<sequence>MMRQSLQAVLPEISGNKTSLLRKSVCSDLLTLFNSPHSTLPSLLVSGMPEWQVHNPSDKHLQSWYCRQLRSALLFHEPRIAALQVNLKEAYCHTLAISLEIMLYHDDEPLTFDLVWDNGGWRSATLENVS</sequence>
<proteinExistence type="inferred from homology"/>
<comment type="function">
    <text evidence="1">Inhibits RpoS proteolysis by regulating RssB activity, thereby increasing the stability of the sigma stress factor RpoS during oxidative stress. Its effect on RpoS stability is due to its interaction with RssB, which probably blocks the interaction of RssB with RpoS, and the consequent delivery of the RssB-RpoS complex to the ClpXP protein degradation pathway.</text>
</comment>
<comment type="subunit">
    <text evidence="1">Interacts with RssB.</text>
</comment>
<comment type="subcellular location">
    <subcellularLocation>
        <location evidence="1">Cytoplasm</location>
    </subcellularLocation>
</comment>
<comment type="similarity">
    <text evidence="1">Belongs to the GpW/Gp25 family. IraD subfamily.</text>
</comment>
<comment type="sequence caution" evidence="2">
    <conflict type="erroneous initiation">
        <sequence resource="EMBL-CDS" id="AAG59509"/>
    </conflict>
    <text>Extended N-terminus.</text>
</comment>
<keyword id="KW-0963">Cytoplasm</keyword>
<keyword id="KW-1185">Reference proteome</keyword>
<keyword id="KW-0346">Stress response</keyword>
<feature type="chain" id="PRO_0000337892" description="Anti-adapter protein IraD">
    <location>
        <begin position="1"/>
        <end position="130"/>
    </location>
</feature>
<organism>
    <name type="scientific">Escherichia coli O157:H7</name>
    <dbReference type="NCBI Taxonomy" id="83334"/>
    <lineage>
        <taxon>Bacteria</taxon>
        <taxon>Pseudomonadati</taxon>
        <taxon>Pseudomonadota</taxon>
        <taxon>Gammaproteobacteria</taxon>
        <taxon>Enterobacterales</taxon>
        <taxon>Enterobacteriaceae</taxon>
        <taxon>Escherichia</taxon>
    </lineage>
</organism>
<accession>Q8XBA4</accession>
<accession>Q7A8M0</accession>
<name>IRAD_ECO57</name>
<protein>
    <recommendedName>
        <fullName evidence="1">Anti-adapter protein IraD</fullName>
    </recommendedName>
</protein>